<protein>
    <recommendedName>
        <fullName evidence="1">Phosphatidylserine decarboxylase proenzyme</fullName>
        <ecNumber evidence="1">4.1.1.65</ecNumber>
    </recommendedName>
    <component>
        <recommendedName>
            <fullName evidence="1">Phosphatidylserine decarboxylase alpha chain</fullName>
        </recommendedName>
    </component>
    <component>
        <recommendedName>
            <fullName evidence="1">Phosphatidylserine decarboxylase beta chain</fullName>
        </recommendedName>
    </component>
</protein>
<keyword id="KW-1003">Cell membrane</keyword>
<keyword id="KW-0210">Decarboxylase</keyword>
<keyword id="KW-0444">Lipid biosynthesis</keyword>
<keyword id="KW-0443">Lipid metabolism</keyword>
<keyword id="KW-0456">Lyase</keyword>
<keyword id="KW-0472">Membrane</keyword>
<keyword id="KW-0594">Phospholipid biosynthesis</keyword>
<keyword id="KW-1208">Phospholipid metabolism</keyword>
<keyword id="KW-0670">Pyruvate</keyword>
<keyword id="KW-0865">Zymogen</keyword>
<accession>Q6F6W3</accession>
<sequence length="285" mass="31370">MSFTSRLKKDLFIKAQSLVPQHQLSRVVGKVAESENILIKAAVIQAFKTKYGIDLSIAEQADALKYKSFNEFFTRALKEGVRVVDSATGSIVSPADGAISQLGTIHDGEVFQAKGQSFSVEKLIGDPQLAQPFKQGQFATVYLSPRDYHRVHMPFTGTLTETLYIPGELFSVNQVTAENIPGLFARNERMVCLFDTELGRMAVVLVGAMIVAGIETVVTGKVKPTGRLELNHHDVTLQKGDELGRFYLGSTAIILFEKDKMVWDQQFKANSIVVMGEKLGQSTNP</sequence>
<comment type="function">
    <text evidence="1">Catalyzes the formation of phosphatidylethanolamine (PtdEtn) from phosphatidylserine (PtdSer).</text>
</comment>
<comment type="catalytic activity">
    <reaction evidence="1">
        <text>a 1,2-diacyl-sn-glycero-3-phospho-L-serine + H(+) = a 1,2-diacyl-sn-glycero-3-phosphoethanolamine + CO2</text>
        <dbReference type="Rhea" id="RHEA:20828"/>
        <dbReference type="ChEBI" id="CHEBI:15378"/>
        <dbReference type="ChEBI" id="CHEBI:16526"/>
        <dbReference type="ChEBI" id="CHEBI:57262"/>
        <dbReference type="ChEBI" id="CHEBI:64612"/>
        <dbReference type="EC" id="4.1.1.65"/>
    </reaction>
</comment>
<comment type="cofactor">
    <cofactor evidence="1">
        <name>pyruvate</name>
        <dbReference type="ChEBI" id="CHEBI:15361"/>
    </cofactor>
    <text evidence="1">Binds 1 pyruvoyl group covalently per subunit.</text>
</comment>
<comment type="pathway">
    <text evidence="1">Phospholipid metabolism; phosphatidylethanolamine biosynthesis; phosphatidylethanolamine from CDP-diacylglycerol: step 2/2.</text>
</comment>
<comment type="subunit">
    <text evidence="1">Heterodimer of a large membrane-associated beta subunit and a small pyruvoyl-containing alpha subunit.</text>
</comment>
<comment type="subcellular location">
    <subcellularLocation>
        <location evidence="1">Cell membrane</location>
        <topology evidence="1">Peripheral membrane protein</topology>
    </subcellularLocation>
</comment>
<comment type="PTM">
    <text evidence="1">Is synthesized initially as an inactive proenzyme. Formation of the active enzyme involves a self-maturation process in which the active site pyruvoyl group is generated from an internal serine residue via an autocatalytic post-translational modification. Two non-identical subunits are generated from the proenzyme in this reaction, and the pyruvate is formed at the N-terminus of the alpha chain, which is derived from the carboxyl end of the proenzyme. The autoendoproteolytic cleavage occurs by a canonical serine protease mechanism, in which the side chain hydroxyl group of the serine supplies its oxygen atom to form the C-terminus of the beta chain, while the remainder of the serine residue undergoes an oxidative deamination to produce ammonia and the pyruvoyl prosthetic group on the alpha chain. During this reaction, the Ser that is part of the protease active site of the proenzyme becomes the pyruvoyl prosthetic group, which constitutes an essential element of the active site of the mature decarboxylase.</text>
</comment>
<comment type="similarity">
    <text evidence="1">Belongs to the phosphatidylserine decarboxylase family. PSD-B subfamily. Prokaryotic type I sub-subfamily.</text>
</comment>
<proteinExistence type="inferred from homology"/>
<dbReference type="EC" id="4.1.1.65" evidence="1"/>
<dbReference type="EMBL" id="CR543861">
    <property type="protein sequence ID" value="CAG70202.1"/>
    <property type="molecule type" value="Genomic_DNA"/>
</dbReference>
<dbReference type="SMR" id="Q6F6W3"/>
<dbReference type="STRING" id="202950.GCA_001485005_01654"/>
<dbReference type="GeneID" id="45235735"/>
<dbReference type="KEGG" id="aci:ACIAD3560"/>
<dbReference type="eggNOG" id="COG0688">
    <property type="taxonomic scope" value="Bacteria"/>
</dbReference>
<dbReference type="HOGENOM" id="CLU_029061_4_1_6"/>
<dbReference type="OrthoDB" id="9802030at2"/>
<dbReference type="BioCyc" id="ASP62977:ACIAD_RS16105-MONOMER"/>
<dbReference type="UniPathway" id="UPA00558">
    <property type="reaction ID" value="UER00616"/>
</dbReference>
<dbReference type="Proteomes" id="UP000000430">
    <property type="component" value="Chromosome"/>
</dbReference>
<dbReference type="GO" id="GO:0005886">
    <property type="term" value="C:plasma membrane"/>
    <property type="evidence" value="ECO:0007669"/>
    <property type="project" value="UniProtKB-SubCell"/>
</dbReference>
<dbReference type="GO" id="GO:0004609">
    <property type="term" value="F:phosphatidylserine decarboxylase activity"/>
    <property type="evidence" value="ECO:0007669"/>
    <property type="project" value="UniProtKB-UniRule"/>
</dbReference>
<dbReference type="GO" id="GO:0006646">
    <property type="term" value="P:phosphatidylethanolamine biosynthetic process"/>
    <property type="evidence" value="ECO:0007669"/>
    <property type="project" value="UniProtKB-UniRule"/>
</dbReference>
<dbReference type="HAMAP" id="MF_00662">
    <property type="entry name" value="PS_decarb_PSD_B_type1"/>
    <property type="match status" value="1"/>
</dbReference>
<dbReference type="InterPro" id="IPR003817">
    <property type="entry name" value="PS_Dcarbxylase"/>
</dbReference>
<dbReference type="InterPro" id="IPR033177">
    <property type="entry name" value="PSD-B"/>
</dbReference>
<dbReference type="InterPro" id="IPR033178">
    <property type="entry name" value="PSD_type1_pro"/>
</dbReference>
<dbReference type="NCBIfam" id="TIGR00163">
    <property type="entry name" value="PS_decarb"/>
    <property type="match status" value="1"/>
</dbReference>
<dbReference type="PANTHER" id="PTHR10067">
    <property type="entry name" value="PHOSPHATIDYLSERINE DECARBOXYLASE"/>
    <property type="match status" value="1"/>
</dbReference>
<dbReference type="PANTHER" id="PTHR10067:SF6">
    <property type="entry name" value="PHOSPHATIDYLSERINE DECARBOXYLASE PROENZYME, MITOCHONDRIAL"/>
    <property type="match status" value="1"/>
</dbReference>
<dbReference type="Pfam" id="PF02666">
    <property type="entry name" value="PS_Dcarbxylase"/>
    <property type="match status" value="1"/>
</dbReference>
<name>PSD_ACIAD</name>
<feature type="chain" id="PRO_0000029616" description="Phosphatidylserine decarboxylase beta chain" evidence="1">
    <location>
        <begin position="1"/>
        <end position="249"/>
    </location>
</feature>
<feature type="chain" id="PRO_0000029617" description="Phosphatidylserine decarboxylase alpha chain" evidence="1">
    <location>
        <begin position="250"/>
        <end position="285"/>
    </location>
</feature>
<feature type="active site" description="Charge relay system; for autoendoproteolytic cleavage activity" evidence="1">
    <location>
        <position position="96"/>
    </location>
</feature>
<feature type="active site" description="Charge relay system; for autoendoproteolytic cleavage activity" evidence="1">
    <location>
        <position position="152"/>
    </location>
</feature>
<feature type="active site" description="Charge relay system; for autoendoproteolytic cleavage activity" evidence="1">
    <location>
        <position position="250"/>
    </location>
</feature>
<feature type="active site" description="Schiff-base intermediate with substrate; via pyruvic acid; for decarboxylase activity" evidence="1">
    <location>
        <position position="250"/>
    </location>
</feature>
<feature type="site" description="Cleavage (non-hydrolytic); by autocatalysis" evidence="1">
    <location>
        <begin position="249"/>
        <end position="250"/>
    </location>
</feature>
<feature type="modified residue" description="Pyruvic acid (Ser); by autocatalysis" evidence="1">
    <location>
        <position position="250"/>
    </location>
</feature>
<reference key="1">
    <citation type="journal article" date="2004" name="Nucleic Acids Res.">
        <title>Unique features revealed by the genome sequence of Acinetobacter sp. ADP1, a versatile and naturally transformation competent bacterium.</title>
        <authorList>
            <person name="Barbe V."/>
            <person name="Vallenet D."/>
            <person name="Fonknechten N."/>
            <person name="Kreimeyer A."/>
            <person name="Oztas S."/>
            <person name="Labarre L."/>
            <person name="Cruveiller S."/>
            <person name="Robert C."/>
            <person name="Duprat S."/>
            <person name="Wincker P."/>
            <person name="Ornston L.N."/>
            <person name="Weissenbach J."/>
            <person name="Marliere P."/>
            <person name="Cohen G.N."/>
            <person name="Medigue C."/>
        </authorList>
    </citation>
    <scope>NUCLEOTIDE SEQUENCE [LARGE SCALE GENOMIC DNA]</scope>
    <source>
        <strain>ATCC 33305 / BD413 / ADP1</strain>
    </source>
</reference>
<evidence type="ECO:0000255" key="1">
    <source>
        <dbReference type="HAMAP-Rule" id="MF_00662"/>
    </source>
</evidence>
<organism>
    <name type="scientific">Acinetobacter baylyi (strain ATCC 33305 / BD413 / ADP1)</name>
    <dbReference type="NCBI Taxonomy" id="62977"/>
    <lineage>
        <taxon>Bacteria</taxon>
        <taxon>Pseudomonadati</taxon>
        <taxon>Pseudomonadota</taxon>
        <taxon>Gammaproteobacteria</taxon>
        <taxon>Moraxellales</taxon>
        <taxon>Moraxellaceae</taxon>
        <taxon>Acinetobacter</taxon>
    </lineage>
</organism>
<gene>
    <name evidence="1" type="primary">psd</name>
    <name type="ordered locus">ACIAD3560</name>
</gene>